<organism>
    <name type="scientific">Neisseria meningitidis serogroup B (strain ATCC BAA-335 / MC58)</name>
    <dbReference type="NCBI Taxonomy" id="122586"/>
    <lineage>
        <taxon>Bacteria</taxon>
        <taxon>Pseudomonadati</taxon>
        <taxon>Pseudomonadota</taxon>
        <taxon>Betaproteobacteria</taxon>
        <taxon>Neisseriales</taxon>
        <taxon>Neisseriaceae</taxon>
        <taxon>Neisseria</taxon>
    </lineage>
</organism>
<sequence length="327" mass="37061">MSEIKTDDPKRGIKLRGADKTARIPIKVVPLQEKLKKPEWIRAKLPSRKFFEIKDILREQKMHTVCEEASCPNIGECFSKGTATFMIMGDICTRRCPFCDVGHGRPNMLDPDEPRNLAESVKAMNLRYVVITSVDRDDLRDGGAQHFADCIKAIRETSPNTKIEILVPDFRGRLDIALKILAETPPDVMNHNLETHPSLYRKARPGANYQHSLDLLKRYKEMMPHIPTKSGIMVGLGETDEDVREIMRDMRAHNIEMITIGQYLQPSDGHLPVLRYVTPEQFKIFEKEAYELGFSNAAIGAMVRSSYHADEQAAEALRESHGGCGHH</sequence>
<dbReference type="EC" id="2.8.1.8" evidence="1"/>
<dbReference type="EMBL" id="AE002098">
    <property type="protein sequence ID" value="AAF41598.1"/>
    <property type="molecule type" value="Genomic_DNA"/>
</dbReference>
<dbReference type="PIR" id="D81109">
    <property type="entry name" value="D81109"/>
</dbReference>
<dbReference type="RefSeq" id="NP_274241.1">
    <property type="nucleotide sequence ID" value="NC_003112.2"/>
</dbReference>
<dbReference type="RefSeq" id="WP_002217175.1">
    <property type="nucleotide sequence ID" value="NC_003112.2"/>
</dbReference>
<dbReference type="SMR" id="Q9JZA5"/>
<dbReference type="FunCoup" id="Q9JZA5">
    <property type="interactions" value="526"/>
</dbReference>
<dbReference type="STRING" id="122586.NMB1216"/>
<dbReference type="PaxDb" id="122586-NMB1216"/>
<dbReference type="KEGG" id="nme:NMB1216"/>
<dbReference type="PATRIC" id="fig|122586.8.peg.1519"/>
<dbReference type="HOGENOM" id="CLU_033144_2_1_4"/>
<dbReference type="InParanoid" id="Q9JZA5"/>
<dbReference type="OrthoDB" id="9787898at2"/>
<dbReference type="UniPathway" id="UPA00538">
    <property type="reaction ID" value="UER00593"/>
</dbReference>
<dbReference type="Proteomes" id="UP000000425">
    <property type="component" value="Chromosome"/>
</dbReference>
<dbReference type="GO" id="GO:0005737">
    <property type="term" value="C:cytoplasm"/>
    <property type="evidence" value="ECO:0007669"/>
    <property type="project" value="UniProtKB-SubCell"/>
</dbReference>
<dbReference type="GO" id="GO:0051539">
    <property type="term" value="F:4 iron, 4 sulfur cluster binding"/>
    <property type="evidence" value="ECO:0007669"/>
    <property type="project" value="UniProtKB-UniRule"/>
</dbReference>
<dbReference type="GO" id="GO:0016992">
    <property type="term" value="F:lipoate synthase activity"/>
    <property type="evidence" value="ECO:0007669"/>
    <property type="project" value="UniProtKB-UniRule"/>
</dbReference>
<dbReference type="GO" id="GO:0046872">
    <property type="term" value="F:metal ion binding"/>
    <property type="evidence" value="ECO:0007669"/>
    <property type="project" value="UniProtKB-KW"/>
</dbReference>
<dbReference type="CDD" id="cd01335">
    <property type="entry name" value="Radical_SAM"/>
    <property type="match status" value="1"/>
</dbReference>
<dbReference type="FunFam" id="3.20.20.70:FF:000023">
    <property type="entry name" value="Lipoyl synthase"/>
    <property type="match status" value="1"/>
</dbReference>
<dbReference type="Gene3D" id="3.20.20.70">
    <property type="entry name" value="Aldolase class I"/>
    <property type="match status" value="1"/>
</dbReference>
<dbReference type="HAMAP" id="MF_00206">
    <property type="entry name" value="Lipoyl_synth"/>
    <property type="match status" value="1"/>
</dbReference>
<dbReference type="InterPro" id="IPR013785">
    <property type="entry name" value="Aldolase_TIM"/>
</dbReference>
<dbReference type="InterPro" id="IPR006638">
    <property type="entry name" value="Elp3/MiaA/NifB-like_rSAM"/>
</dbReference>
<dbReference type="InterPro" id="IPR031691">
    <property type="entry name" value="LIAS_N"/>
</dbReference>
<dbReference type="InterPro" id="IPR003698">
    <property type="entry name" value="Lipoyl_synth"/>
</dbReference>
<dbReference type="InterPro" id="IPR007197">
    <property type="entry name" value="rSAM"/>
</dbReference>
<dbReference type="NCBIfam" id="TIGR00510">
    <property type="entry name" value="lipA"/>
    <property type="match status" value="1"/>
</dbReference>
<dbReference type="NCBIfam" id="NF004019">
    <property type="entry name" value="PRK05481.1"/>
    <property type="match status" value="1"/>
</dbReference>
<dbReference type="NCBIfam" id="NF009544">
    <property type="entry name" value="PRK12928.1"/>
    <property type="match status" value="1"/>
</dbReference>
<dbReference type="PANTHER" id="PTHR10949">
    <property type="entry name" value="LIPOYL SYNTHASE"/>
    <property type="match status" value="1"/>
</dbReference>
<dbReference type="PANTHER" id="PTHR10949:SF0">
    <property type="entry name" value="LIPOYL SYNTHASE, MITOCHONDRIAL"/>
    <property type="match status" value="1"/>
</dbReference>
<dbReference type="Pfam" id="PF16881">
    <property type="entry name" value="LIAS_N"/>
    <property type="match status" value="1"/>
</dbReference>
<dbReference type="Pfam" id="PF04055">
    <property type="entry name" value="Radical_SAM"/>
    <property type="match status" value="1"/>
</dbReference>
<dbReference type="PIRSF" id="PIRSF005963">
    <property type="entry name" value="Lipoyl_synth"/>
    <property type="match status" value="1"/>
</dbReference>
<dbReference type="SFLD" id="SFLDF00271">
    <property type="entry name" value="lipoyl_synthase"/>
    <property type="match status" value="1"/>
</dbReference>
<dbReference type="SFLD" id="SFLDS00029">
    <property type="entry name" value="Radical_SAM"/>
    <property type="match status" value="1"/>
</dbReference>
<dbReference type="SMART" id="SM00729">
    <property type="entry name" value="Elp3"/>
    <property type="match status" value="1"/>
</dbReference>
<dbReference type="SUPFAM" id="SSF102114">
    <property type="entry name" value="Radical SAM enzymes"/>
    <property type="match status" value="1"/>
</dbReference>
<dbReference type="PROSITE" id="PS51918">
    <property type="entry name" value="RADICAL_SAM"/>
    <property type="match status" value="1"/>
</dbReference>
<accession>Q9JZA5</accession>
<feature type="chain" id="PRO_0000102329" description="Lipoyl synthase">
    <location>
        <begin position="1"/>
        <end position="327"/>
    </location>
</feature>
<feature type="domain" description="Radical SAM core" evidence="2">
    <location>
        <begin position="78"/>
        <end position="295"/>
    </location>
</feature>
<feature type="binding site" evidence="1">
    <location>
        <position position="66"/>
    </location>
    <ligand>
        <name>[4Fe-4S] cluster</name>
        <dbReference type="ChEBI" id="CHEBI:49883"/>
        <label>1</label>
    </ligand>
</feature>
<feature type="binding site" evidence="1">
    <location>
        <position position="71"/>
    </location>
    <ligand>
        <name>[4Fe-4S] cluster</name>
        <dbReference type="ChEBI" id="CHEBI:49883"/>
        <label>1</label>
    </ligand>
</feature>
<feature type="binding site" evidence="1">
    <location>
        <position position="77"/>
    </location>
    <ligand>
        <name>[4Fe-4S] cluster</name>
        <dbReference type="ChEBI" id="CHEBI:49883"/>
        <label>1</label>
    </ligand>
</feature>
<feature type="binding site" evidence="1">
    <location>
        <position position="92"/>
    </location>
    <ligand>
        <name>[4Fe-4S] cluster</name>
        <dbReference type="ChEBI" id="CHEBI:49883"/>
        <label>2</label>
        <note>4Fe-4S-S-AdoMet</note>
    </ligand>
</feature>
<feature type="binding site" evidence="1">
    <location>
        <position position="96"/>
    </location>
    <ligand>
        <name>[4Fe-4S] cluster</name>
        <dbReference type="ChEBI" id="CHEBI:49883"/>
        <label>2</label>
        <note>4Fe-4S-S-AdoMet</note>
    </ligand>
</feature>
<feature type="binding site" evidence="1">
    <location>
        <position position="99"/>
    </location>
    <ligand>
        <name>[4Fe-4S] cluster</name>
        <dbReference type="ChEBI" id="CHEBI:49883"/>
        <label>2</label>
        <note>4Fe-4S-S-AdoMet</note>
    </ligand>
</feature>
<feature type="binding site" evidence="1">
    <location>
        <position position="306"/>
    </location>
    <ligand>
        <name>[4Fe-4S] cluster</name>
        <dbReference type="ChEBI" id="CHEBI:49883"/>
        <label>1</label>
    </ligand>
</feature>
<name>LIPA_NEIMB</name>
<comment type="function">
    <text evidence="1">Catalyzes the radical-mediated insertion of two sulfur atoms into the C-6 and C-8 positions of the octanoyl moiety bound to the lipoyl domains of lipoate-dependent enzymes, thereby converting the octanoylated domains into lipoylated derivatives.</text>
</comment>
<comment type="catalytic activity">
    <reaction evidence="1">
        <text>[[Fe-S] cluster scaffold protein carrying a second [4Fe-4S](2+) cluster] + N(6)-octanoyl-L-lysyl-[protein] + 2 oxidized [2Fe-2S]-[ferredoxin] + 2 S-adenosyl-L-methionine + 4 H(+) = [[Fe-S] cluster scaffold protein] + N(6)-[(R)-dihydrolipoyl]-L-lysyl-[protein] + 4 Fe(3+) + 2 hydrogen sulfide + 2 5'-deoxyadenosine + 2 L-methionine + 2 reduced [2Fe-2S]-[ferredoxin]</text>
        <dbReference type="Rhea" id="RHEA:16585"/>
        <dbReference type="Rhea" id="RHEA-COMP:9928"/>
        <dbReference type="Rhea" id="RHEA-COMP:10000"/>
        <dbReference type="Rhea" id="RHEA-COMP:10001"/>
        <dbReference type="Rhea" id="RHEA-COMP:10475"/>
        <dbReference type="Rhea" id="RHEA-COMP:14568"/>
        <dbReference type="Rhea" id="RHEA-COMP:14569"/>
        <dbReference type="ChEBI" id="CHEBI:15378"/>
        <dbReference type="ChEBI" id="CHEBI:17319"/>
        <dbReference type="ChEBI" id="CHEBI:29034"/>
        <dbReference type="ChEBI" id="CHEBI:29919"/>
        <dbReference type="ChEBI" id="CHEBI:33722"/>
        <dbReference type="ChEBI" id="CHEBI:33737"/>
        <dbReference type="ChEBI" id="CHEBI:33738"/>
        <dbReference type="ChEBI" id="CHEBI:57844"/>
        <dbReference type="ChEBI" id="CHEBI:59789"/>
        <dbReference type="ChEBI" id="CHEBI:78809"/>
        <dbReference type="ChEBI" id="CHEBI:83100"/>
        <dbReference type="EC" id="2.8.1.8"/>
    </reaction>
</comment>
<comment type="cofactor">
    <cofactor evidence="1">
        <name>[4Fe-4S] cluster</name>
        <dbReference type="ChEBI" id="CHEBI:49883"/>
    </cofactor>
    <text evidence="1">Binds 2 [4Fe-4S] clusters per subunit. One cluster is coordinated with 3 cysteines and an exchangeable S-adenosyl-L-methionine.</text>
</comment>
<comment type="pathway">
    <text evidence="1">Protein modification; protein lipoylation via endogenous pathway; protein N(6)-(lipoyl)lysine from octanoyl-[acyl-carrier-protein]: step 2/2.</text>
</comment>
<comment type="subcellular location">
    <subcellularLocation>
        <location evidence="1">Cytoplasm</location>
    </subcellularLocation>
</comment>
<comment type="similarity">
    <text evidence="1">Belongs to the radical SAM superfamily. Lipoyl synthase family.</text>
</comment>
<keyword id="KW-0004">4Fe-4S</keyword>
<keyword id="KW-0963">Cytoplasm</keyword>
<keyword id="KW-0408">Iron</keyword>
<keyword id="KW-0411">Iron-sulfur</keyword>
<keyword id="KW-0479">Metal-binding</keyword>
<keyword id="KW-1185">Reference proteome</keyword>
<keyword id="KW-0949">S-adenosyl-L-methionine</keyword>
<keyword id="KW-0808">Transferase</keyword>
<gene>
    <name evidence="1" type="primary">lipA</name>
    <name type="ordered locus">NMB1216</name>
</gene>
<reference key="1">
    <citation type="journal article" date="2000" name="Science">
        <title>Complete genome sequence of Neisseria meningitidis serogroup B strain MC58.</title>
        <authorList>
            <person name="Tettelin H."/>
            <person name="Saunders N.J."/>
            <person name="Heidelberg J.F."/>
            <person name="Jeffries A.C."/>
            <person name="Nelson K.E."/>
            <person name="Eisen J.A."/>
            <person name="Ketchum K.A."/>
            <person name="Hood D.W."/>
            <person name="Peden J.F."/>
            <person name="Dodson R.J."/>
            <person name="Nelson W.C."/>
            <person name="Gwinn M.L."/>
            <person name="DeBoy R.T."/>
            <person name="Peterson J.D."/>
            <person name="Hickey E.K."/>
            <person name="Haft D.H."/>
            <person name="Salzberg S.L."/>
            <person name="White O."/>
            <person name="Fleischmann R.D."/>
            <person name="Dougherty B.A."/>
            <person name="Mason T.M."/>
            <person name="Ciecko A."/>
            <person name="Parksey D.S."/>
            <person name="Blair E."/>
            <person name="Cittone H."/>
            <person name="Clark E.B."/>
            <person name="Cotton M.D."/>
            <person name="Utterback T.R."/>
            <person name="Khouri H.M."/>
            <person name="Qin H."/>
            <person name="Vamathevan J.J."/>
            <person name="Gill J."/>
            <person name="Scarlato V."/>
            <person name="Masignani V."/>
            <person name="Pizza M."/>
            <person name="Grandi G."/>
            <person name="Sun L."/>
            <person name="Smith H.O."/>
            <person name="Fraser C.M."/>
            <person name="Moxon E.R."/>
            <person name="Rappuoli R."/>
            <person name="Venter J.C."/>
        </authorList>
    </citation>
    <scope>NUCLEOTIDE SEQUENCE [LARGE SCALE GENOMIC DNA]</scope>
    <source>
        <strain>ATCC BAA-335 / MC58</strain>
    </source>
</reference>
<proteinExistence type="inferred from homology"/>
<evidence type="ECO:0000255" key="1">
    <source>
        <dbReference type="HAMAP-Rule" id="MF_00206"/>
    </source>
</evidence>
<evidence type="ECO:0000255" key="2">
    <source>
        <dbReference type="PROSITE-ProRule" id="PRU01266"/>
    </source>
</evidence>
<protein>
    <recommendedName>
        <fullName evidence="1">Lipoyl synthase</fullName>
        <ecNumber evidence="1">2.8.1.8</ecNumber>
    </recommendedName>
    <alternativeName>
        <fullName evidence="1">Lip-syn</fullName>
        <shortName evidence="1">LS</shortName>
    </alternativeName>
    <alternativeName>
        <fullName evidence="1">Lipoate synthase</fullName>
    </alternativeName>
    <alternativeName>
        <fullName evidence="1">Lipoic acid synthase</fullName>
    </alternativeName>
    <alternativeName>
        <fullName evidence="1">Sulfur insertion protein LipA</fullName>
    </alternativeName>
</protein>